<name>MTAP_HYPBU</name>
<reference key="1">
    <citation type="journal article" date="2007" name="Archaea">
        <title>The genome of Hyperthermus butylicus: a sulfur-reducing, peptide fermenting, neutrophilic Crenarchaeote growing up to 108 degrees C.</title>
        <authorList>
            <person name="Bruegger K."/>
            <person name="Chen L."/>
            <person name="Stark M."/>
            <person name="Zibat A."/>
            <person name="Redder P."/>
            <person name="Ruepp A."/>
            <person name="Awayez M."/>
            <person name="She Q."/>
            <person name="Garrett R.A."/>
            <person name="Klenk H.-P."/>
        </authorList>
    </citation>
    <scope>NUCLEOTIDE SEQUENCE [LARGE SCALE GENOMIC DNA]</scope>
    <source>
        <strain>DSM 5456 / JCM 9403 / PLM1-5</strain>
    </source>
</reference>
<gene>
    <name evidence="1" type="primary">mtnP</name>
    <name type="ordered locus">Hbut_0022</name>
</gene>
<dbReference type="EC" id="2.4.2.28" evidence="1"/>
<dbReference type="EMBL" id="CP000493">
    <property type="protein sequence ID" value="ABM79900.1"/>
    <property type="molecule type" value="Genomic_DNA"/>
</dbReference>
<dbReference type="RefSeq" id="WP_011821217.1">
    <property type="nucleotide sequence ID" value="NC_008818.1"/>
</dbReference>
<dbReference type="SMR" id="A2BIU4"/>
<dbReference type="STRING" id="415426.Hbut_0022"/>
<dbReference type="EnsemblBacteria" id="ABM79900">
    <property type="protein sequence ID" value="ABM79900"/>
    <property type="gene ID" value="Hbut_0022"/>
</dbReference>
<dbReference type="GeneID" id="4782054"/>
<dbReference type="KEGG" id="hbu:Hbut_0022"/>
<dbReference type="eggNOG" id="arCOG01327">
    <property type="taxonomic scope" value="Archaea"/>
</dbReference>
<dbReference type="HOGENOM" id="CLU_054456_0_2_2"/>
<dbReference type="OrthoDB" id="7681at2157"/>
<dbReference type="UniPathway" id="UPA00904">
    <property type="reaction ID" value="UER00873"/>
</dbReference>
<dbReference type="Proteomes" id="UP000002593">
    <property type="component" value="Chromosome"/>
</dbReference>
<dbReference type="GO" id="GO:0005829">
    <property type="term" value="C:cytosol"/>
    <property type="evidence" value="ECO:0007669"/>
    <property type="project" value="TreeGrafter"/>
</dbReference>
<dbReference type="GO" id="GO:0017061">
    <property type="term" value="F:S-methyl-5-thioadenosine phosphorylase activity"/>
    <property type="evidence" value="ECO:0007669"/>
    <property type="project" value="UniProtKB-UniRule"/>
</dbReference>
<dbReference type="GO" id="GO:0019509">
    <property type="term" value="P:L-methionine salvage from methylthioadenosine"/>
    <property type="evidence" value="ECO:0007669"/>
    <property type="project" value="UniProtKB-UniRule"/>
</dbReference>
<dbReference type="GO" id="GO:0006166">
    <property type="term" value="P:purine ribonucleoside salvage"/>
    <property type="evidence" value="ECO:0007669"/>
    <property type="project" value="UniProtKB-KW"/>
</dbReference>
<dbReference type="CDD" id="cd09010">
    <property type="entry name" value="MTAP_SsMTAPII_like_MTIP"/>
    <property type="match status" value="1"/>
</dbReference>
<dbReference type="FunFam" id="3.40.50.1580:FF:000012">
    <property type="entry name" value="Probable 6-oxopurine nucleoside phosphorylase"/>
    <property type="match status" value="1"/>
</dbReference>
<dbReference type="Gene3D" id="3.40.50.1580">
    <property type="entry name" value="Nucleoside phosphorylase domain"/>
    <property type="match status" value="1"/>
</dbReference>
<dbReference type="HAMAP" id="MF_01963">
    <property type="entry name" value="MTAP"/>
    <property type="match status" value="1"/>
</dbReference>
<dbReference type="InterPro" id="IPR010044">
    <property type="entry name" value="MTAP"/>
</dbReference>
<dbReference type="InterPro" id="IPR000845">
    <property type="entry name" value="Nucleoside_phosphorylase_d"/>
</dbReference>
<dbReference type="InterPro" id="IPR035994">
    <property type="entry name" value="Nucleoside_phosphorylase_sf"/>
</dbReference>
<dbReference type="InterPro" id="IPR018099">
    <property type="entry name" value="Purine_phosphorylase-2_CS"/>
</dbReference>
<dbReference type="NCBIfam" id="TIGR01694">
    <property type="entry name" value="MTAP"/>
    <property type="match status" value="1"/>
</dbReference>
<dbReference type="NCBIfam" id="NF006334">
    <property type="entry name" value="PRK08564.1"/>
    <property type="match status" value="1"/>
</dbReference>
<dbReference type="NCBIfam" id="NF006599">
    <property type="entry name" value="PRK09136.1"/>
    <property type="match status" value="1"/>
</dbReference>
<dbReference type="PANTHER" id="PTHR42679">
    <property type="entry name" value="S-METHYL-5'-THIOADENOSINE PHOSPHORYLASE"/>
    <property type="match status" value="1"/>
</dbReference>
<dbReference type="PANTHER" id="PTHR42679:SF3">
    <property type="entry name" value="S-METHYL-5'-THIOADENOSINE PHOSPHORYLASE"/>
    <property type="match status" value="1"/>
</dbReference>
<dbReference type="Pfam" id="PF01048">
    <property type="entry name" value="PNP_UDP_1"/>
    <property type="match status" value="1"/>
</dbReference>
<dbReference type="SUPFAM" id="SSF53167">
    <property type="entry name" value="Purine and uridine phosphorylases"/>
    <property type="match status" value="1"/>
</dbReference>
<dbReference type="PROSITE" id="PS01240">
    <property type="entry name" value="PNP_MTAP_2"/>
    <property type="match status" value="1"/>
</dbReference>
<organism>
    <name type="scientific">Hyperthermus butylicus (strain DSM 5456 / JCM 9403 / PLM1-5)</name>
    <dbReference type="NCBI Taxonomy" id="415426"/>
    <lineage>
        <taxon>Archaea</taxon>
        <taxon>Thermoproteota</taxon>
        <taxon>Thermoprotei</taxon>
        <taxon>Desulfurococcales</taxon>
        <taxon>Pyrodictiaceae</taxon>
        <taxon>Hyperthermus</taxon>
    </lineage>
</organism>
<protein>
    <recommendedName>
        <fullName evidence="1">S-methyl-5'-thioadenosine phosphorylase</fullName>
        <ecNumber evidence="1">2.4.2.28</ecNumber>
    </recommendedName>
    <alternativeName>
        <fullName evidence="1">5'-methylthioadenosine phosphorylase</fullName>
        <shortName evidence="1">MTA phosphorylase</shortName>
        <shortName evidence="1">MTAP</shortName>
    </alternativeName>
</protein>
<evidence type="ECO:0000255" key="1">
    <source>
        <dbReference type="HAMAP-Rule" id="MF_01963"/>
    </source>
</evidence>
<proteinExistence type="inferred from homology"/>
<accession>A2BIU4</accession>
<keyword id="KW-0328">Glycosyltransferase</keyword>
<keyword id="KW-0660">Purine salvage</keyword>
<keyword id="KW-1185">Reference proteome</keyword>
<keyword id="KW-0808">Transferase</keyword>
<feature type="chain" id="PRO_0000415104" description="S-methyl-5'-thioadenosine phosphorylase">
    <location>
        <begin position="1"/>
        <end position="274"/>
    </location>
</feature>
<feature type="binding site" evidence="1">
    <location>
        <position position="20"/>
    </location>
    <ligand>
        <name>phosphate</name>
        <dbReference type="ChEBI" id="CHEBI:43474"/>
    </ligand>
</feature>
<feature type="binding site" evidence="1">
    <location>
        <begin position="62"/>
        <end position="63"/>
    </location>
    <ligand>
        <name>phosphate</name>
        <dbReference type="ChEBI" id="CHEBI:43474"/>
    </ligand>
</feature>
<feature type="binding site" evidence="1">
    <location>
        <begin position="95"/>
        <end position="96"/>
    </location>
    <ligand>
        <name>phosphate</name>
        <dbReference type="ChEBI" id="CHEBI:43474"/>
    </ligand>
</feature>
<feature type="binding site" evidence="1">
    <location>
        <position position="194"/>
    </location>
    <ligand>
        <name>substrate</name>
    </ligand>
</feature>
<feature type="binding site" evidence="1">
    <location>
        <position position="195"/>
    </location>
    <ligand>
        <name>phosphate</name>
        <dbReference type="ChEBI" id="CHEBI:43474"/>
    </ligand>
</feature>
<feature type="binding site" evidence="1">
    <location>
        <begin position="218"/>
        <end position="220"/>
    </location>
    <ligand>
        <name>substrate</name>
    </ligand>
</feature>
<feature type="site" description="Important for substrate specificity" evidence="1">
    <location>
        <position position="175"/>
    </location>
</feature>
<feature type="site" description="Important for substrate specificity" evidence="1">
    <location>
        <position position="229"/>
    </location>
</feature>
<sequence>MPDFPPKPSVKADIAIIGGSGLYDPGVLENAKEYKIYTPYGEPSDYIIVGELGGKRVAFLPRHGRGHRIPPHKINYRANIWALKMLGVKWVIAVSAVGSLREDYKPGDIVVPDQFIDMTKSRVYTFFDEGIVAHVSMADPFCEHLRQEIISTARELGYRVHPRGTYICIEGPRFSTRAESRVWREVFKADIIGMTLVPEVNLACEAQLCYATIALVTDYDVWAERPVTAEEVARVMKENTEKAKKILYKLIPRLPPEPDKARCSCCSSLETALL</sequence>
<comment type="function">
    <text evidence="1">Catalyzes the reversible phosphorylation of S-methyl-5'-thioadenosine (MTA) to adenine and 5-methylthioribose-1-phosphate. Involved in the breakdown of MTA, a major by-product of polyamine biosynthesis. Responsible for the first step in the methionine salvage pathway after MTA has been generated from S-adenosylmethionine. Has broad substrate specificity with 6-aminopurine nucleosides as preferred substrates.</text>
</comment>
<comment type="catalytic activity">
    <reaction evidence="1">
        <text>S-methyl-5'-thioadenosine + phosphate = 5-(methylsulfanyl)-alpha-D-ribose 1-phosphate + adenine</text>
        <dbReference type="Rhea" id="RHEA:11852"/>
        <dbReference type="ChEBI" id="CHEBI:16708"/>
        <dbReference type="ChEBI" id="CHEBI:17509"/>
        <dbReference type="ChEBI" id="CHEBI:43474"/>
        <dbReference type="ChEBI" id="CHEBI:58533"/>
        <dbReference type="EC" id="2.4.2.28"/>
    </reaction>
</comment>
<comment type="pathway">
    <text evidence="1">Amino-acid biosynthesis; L-methionine biosynthesis via salvage pathway; S-methyl-5-thio-alpha-D-ribose 1-phosphate from S-methyl-5'-thioadenosine (phosphorylase route): step 1/1.</text>
</comment>
<comment type="subunit">
    <text evidence="1">Homohexamer. Dimer of a homotrimer.</text>
</comment>
<comment type="similarity">
    <text evidence="1">Belongs to the PNP/MTAP phosphorylase family. MTAP subfamily.</text>
</comment>